<sequence length="290" mass="32324">MDIGLREWLIVIGLIVIAGILFDGWRRMRGGKGKLKFKLDRSFANLPDDDGDSAELLGPARVVEHREPSFDEQDLPSVSAREGKERKGGKRQDEPRQGDLDLDEGMALEADPSDAAEPLEPRKGKSKGRKEKEREKAPSVAAAEPAPVDEVLIINVIARDESGFKGPALLQNILESGLRFGDMDIFHRHESMAGNGEILFSMANAVKPGTFDLDDIDNFSTRAVSFFLGLPGPRHPKQAFDVMVAAARKLAHELNGELKDEQRSVLTAQTIEHYRQRIIDHERRSLMQKR</sequence>
<organism>
    <name type="scientific">Pseudomonas paraeruginosa (strain DSM 24068 / PA7)</name>
    <name type="common">Pseudomonas aeruginosa (strain PA7)</name>
    <dbReference type="NCBI Taxonomy" id="381754"/>
    <lineage>
        <taxon>Bacteria</taxon>
        <taxon>Pseudomonadati</taxon>
        <taxon>Pseudomonadota</taxon>
        <taxon>Gammaproteobacteria</taxon>
        <taxon>Pseudomonadales</taxon>
        <taxon>Pseudomonadaceae</taxon>
        <taxon>Pseudomonas</taxon>
        <taxon>Pseudomonas paraeruginosa</taxon>
    </lineage>
</organism>
<gene>
    <name evidence="1" type="primary">zipA</name>
    <name type="ordered locus">PSPA7_3805</name>
</gene>
<reference key="1">
    <citation type="submission" date="2007-06" db="EMBL/GenBank/DDBJ databases">
        <authorList>
            <person name="Dodson R.J."/>
            <person name="Harkins D."/>
            <person name="Paulsen I.T."/>
        </authorList>
    </citation>
    <scope>NUCLEOTIDE SEQUENCE [LARGE SCALE GENOMIC DNA]</scope>
    <source>
        <strain>DSM 24068 / PA7</strain>
    </source>
</reference>
<proteinExistence type="inferred from homology"/>
<feature type="chain" id="PRO_1000015146" description="Cell division protein ZipA">
    <location>
        <begin position="1"/>
        <end position="290"/>
    </location>
</feature>
<feature type="topological domain" description="Periplasmic" evidence="1">
    <location>
        <position position="1"/>
    </location>
</feature>
<feature type="transmembrane region" description="Helical" evidence="1">
    <location>
        <begin position="2"/>
        <end position="22"/>
    </location>
</feature>
<feature type="topological domain" description="Cytoplasmic" evidence="1">
    <location>
        <begin position="23"/>
        <end position="290"/>
    </location>
</feature>
<feature type="region of interest" description="Disordered" evidence="2">
    <location>
        <begin position="66"/>
        <end position="143"/>
    </location>
</feature>
<feature type="compositionally biased region" description="Basic and acidic residues" evidence="2">
    <location>
        <begin position="81"/>
        <end position="99"/>
    </location>
</feature>
<feature type="compositionally biased region" description="Acidic residues" evidence="2">
    <location>
        <begin position="100"/>
        <end position="114"/>
    </location>
</feature>
<keyword id="KW-0131">Cell cycle</keyword>
<keyword id="KW-0132">Cell division</keyword>
<keyword id="KW-0997">Cell inner membrane</keyword>
<keyword id="KW-1003">Cell membrane</keyword>
<keyword id="KW-0472">Membrane</keyword>
<keyword id="KW-0812">Transmembrane</keyword>
<keyword id="KW-1133">Transmembrane helix</keyword>
<name>ZIPA_PSEP7</name>
<accession>A6V7X4</accession>
<protein>
    <recommendedName>
        <fullName evidence="1">Cell division protein ZipA</fullName>
    </recommendedName>
</protein>
<evidence type="ECO:0000255" key="1">
    <source>
        <dbReference type="HAMAP-Rule" id="MF_00509"/>
    </source>
</evidence>
<evidence type="ECO:0000256" key="2">
    <source>
        <dbReference type="SAM" id="MobiDB-lite"/>
    </source>
</evidence>
<comment type="function">
    <text evidence="1">Essential cell division protein that stabilizes the FtsZ protofilaments by cross-linking them and that serves as a cytoplasmic membrane anchor for the Z ring. Also required for the recruitment to the septal ring of downstream cell division proteins.</text>
</comment>
<comment type="subunit">
    <text evidence="1">Interacts with FtsZ via their C-terminal domains.</text>
</comment>
<comment type="subcellular location">
    <subcellularLocation>
        <location evidence="1">Cell inner membrane</location>
        <topology evidence="1">Single-pass type I membrane protein</topology>
    </subcellularLocation>
    <text evidence="1">Localizes to the Z ring in an FtsZ-dependent manner.</text>
</comment>
<comment type="similarity">
    <text evidence="1">Belongs to the ZipA family.</text>
</comment>
<dbReference type="EMBL" id="CP000744">
    <property type="protein sequence ID" value="ABR80911.1"/>
    <property type="molecule type" value="Genomic_DNA"/>
</dbReference>
<dbReference type="RefSeq" id="WP_003150445.1">
    <property type="nucleotide sequence ID" value="NC_009656.1"/>
</dbReference>
<dbReference type="SMR" id="A6V7X4"/>
<dbReference type="GeneID" id="77221862"/>
<dbReference type="KEGG" id="pap:PSPA7_3805"/>
<dbReference type="HOGENOM" id="CLU_030174_0_1_6"/>
<dbReference type="Proteomes" id="UP000001582">
    <property type="component" value="Chromosome"/>
</dbReference>
<dbReference type="GO" id="GO:0032153">
    <property type="term" value="C:cell division site"/>
    <property type="evidence" value="ECO:0007669"/>
    <property type="project" value="UniProtKB-UniRule"/>
</dbReference>
<dbReference type="GO" id="GO:0005886">
    <property type="term" value="C:plasma membrane"/>
    <property type="evidence" value="ECO:0007669"/>
    <property type="project" value="UniProtKB-SubCell"/>
</dbReference>
<dbReference type="GO" id="GO:0000917">
    <property type="term" value="P:division septum assembly"/>
    <property type="evidence" value="ECO:0007669"/>
    <property type="project" value="TreeGrafter"/>
</dbReference>
<dbReference type="GO" id="GO:0043093">
    <property type="term" value="P:FtsZ-dependent cytokinesis"/>
    <property type="evidence" value="ECO:0007669"/>
    <property type="project" value="UniProtKB-UniRule"/>
</dbReference>
<dbReference type="CDD" id="cd00231">
    <property type="entry name" value="ZipA"/>
    <property type="match status" value="1"/>
</dbReference>
<dbReference type="FunFam" id="3.30.1400.10:FF:000002">
    <property type="entry name" value="Cell division protein ZipA"/>
    <property type="match status" value="1"/>
</dbReference>
<dbReference type="Gene3D" id="3.30.1400.10">
    <property type="entry name" value="ZipA, C-terminal FtsZ-binding domain"/>
    <property type="match status" value="1"/>
</dbReference>
<dbReference type="HAMAP" id="MF_00509">
    <property type="entry name" value="ZipA"/>
    <property type="match status" value="1"/>
</dbReference>
<dbReference type="InterPro" id="IPR011919">
    <property type="entry name" value="Cell_div_ZipA"/>
</dbReference>
<dbReference type="InterPro" id="IPR007449">
    <property type="entry name" value="ZipA_FtsZ-bd_C"/>
</dbReference>
<dbReference type="InterPro" id="IPR036765">
    <property type="entry name" value="ZipA_FtsZ-bd_C_sf"/>
</dbReference>
<dbReference type="NCBIfam" id="TIGR02205">
    <property type="entry name" value="septum_zipA"/>
    <property type="match status" value="1"/>
</dbReference>
<dbReference type="PANTHER" id="PTHR38685">
    <property type="entry name" value="CELL DIVISION PROTEIN ZIPA"/>
    <property type="match status" value="1"/>
</dbReference>
<dbReference type="PANTHER" id="PTHR38685:SF1">
    <property type="entry name" value="CELL DIVISION PROTEIN ZIPA"/>
    <property type="match status" value="1"/>
</dbReference>
<dbReference type="Pfam" id="PF04354">
    <property type="entry name" value="ZipA_C"/>
    <property type="match status" value="1"/>
</dbReference>
<dbReference type="SMART" id="SM00771">
    <property type="entry name" value="ZipA_C"/>
    <property type="match status" value="1"/>
</dbReference>
<dbReference type="SUPFAM" id="SSF64383">
    <property type="entry name" value="Cell-division protein ZipA, C-terminal domain"/>
    <property type="match status" value="1"/>
</dbReference>